<organism>
    <name type="scientific">Euroscaptor micrura</name>
    <name type="common">Himalayan mole</name>
    <name type="synonym">Talpa micrura</name>
    <dbReference type="NCBI Taxonomy" id="286131"/>
    <lineage>
        <taxon>Eukaryota</taxon>
        <taxon>Metazoa</taxon>
        <taxon>Chordata</taxon>
        <taxon>Craniata</taxon>
        <taxon>Vertebrata</taxon>
        <taxon>Euteleostomi</taxon>
        <taxon>Mammalia</taxon>
        <taxon>Eutheria</taxon>
        <taxon>Laurasiatheria</taxon>
        <taxon>Eulipotyphla</taxon>
        <taxon>Talpidae</taxon>
        <taxon>Euroscaptor</taxon>
    </lineage>
</organism>
<gene>
    <name type="primary">MT-CYB</name>
    <name type="synonym">COB</name>
    <name type="synonym">CYTB</name>
    <name type="synonym">MTCYB</name>
</gene>
<accession>Q5DWG5</accession>
<accession>Q5DWG6</accession>
<sequence>MTNIRKTHPLMKIINNSFIDLPAPSNISSWWNFGSLLGICLTLQILTGLFLAMHYTSDTTTAFSSVTHICRDVNYGWLIRYLHANGASMFFICLFLHVGRGLYYGSYMFMETWNIGVILLFAVMATAFMGYVLPWGQMSFWGATVITNLLSAIPYIGTDLVEWIWGGFSVDKATLTRFFAFHFILPFIIAALAGVHLLFLHETGSNNPSGLSSDTDKIPFHPYYTIKDILGALVMILALSILVLFSPDLLGDPDNYIPANPLNTPPHIKPEWYFLFAYAILRSIPNKLGGVLALVFSILILALMPLLHTSKQRSMMFRPISQCLFWLLVADLLTLTWIGGQPVEHPFIIIGQLASILYFALILILMPLASLMENNLLKW</sequence>
<comment type="function">
    <text evidence="2">Component of the ubiquinol-cytochrome c reductase complex (complex III or cytochrome b-c1 complex) that is part of the mitochondrial respiratory chain. The b-c1 complex mediates electron transfer from ubiquinol to cytochrome c. Contributes to the generation of a proton gradient across the mitochondrial membrane that is then used for ATP synthesis.</text>
</comment>
<comment type="cofactor">
    <cofactor evidence="2">
        <name>heme b</name>
        <dbReference type="ChEBI" id="CHEBI:60344"/>
    </cofactor>
    <text evidence="2">Binds 2 heme b groups non-covalently.</text>
</comment>
<comment type="subunit">
    <text evidence="2">The cytochrome bc1 complex contains 11 subunits: 3 respiratory subunits (MT-CYB, CYC1 and UQCRFS1), 2 core proteins (UQCRC1 and UQCRC2) and 6 low-molecular weight proteins (UQCRH/QCR6, UQCRB/QCR7, UQCRQ/QCR8, UQCR10/QCR9, UQCR11/QCR10 and a cleavage product of UQCRFS1). This cytochrome bc1 complex then forms a dimer.</text>
</comment>
<comment type="subcellular location">
    <subcellularLocation>
        <location evidence="2">Mitochondrion inner membrane</location>
        <topology evidence="2">Multi-pass membrane protein</topology>
    </subcellularLocation>
</comment>
<comment type="miscellaneous">
    <text evidence="1">Heme 1 (or BL or b562) is low-potential and absorbs at about 562 nm, and heme 2 (or BH or b566) is high-potential and absorbs at about 566 nm.</text>
</comment>
<comment type="similarity">
    <text evidence="3 4">Belongs to the cytochrome b family.</text>
</comment>
<comment type="caution">
    <text evidence="2">The full-length protein contains only eight transmembrane helices, not nine as predicted by bioinformatics tools.</text>
</comment>
<name>CYB_EURMC</name>
<reference key="1">
    <citation type="journal article" date="2004" name="Mammal Study">
        <title>Phylogenetic position of the Malaysian mole, Euroscaptor micrura (Mammalia: Eulipotyphla), inferred from three gene sequences.</title>
        <authorList>
            <person name="Shinohara A."/>
            <person name="Kawada S."/>
            <person name="Yasuda M."/>
            <person name="Liat L.B."/>
        </authorList>
    </citation>
    <scope>NUCLEOTIDE SEQUENCE [GENOMIC DNA]</scope>
    <source>
        <strain>Isolate SIK0550</strain>
        <strain>Isolate SIK0557</strain>
    </source>
</reference>
<dbReference type="EMBL" id="AB185151">
    <property type="protein sequence ID" value="BAD90691.1"/>
    <property type="molecule type" value="Genomic_DNA"/>
</dbReference>
<dbReference type="EMBL" id="AB185152">
    <property type="protein sequence ID" value="BAD90692.1"/>
    <property type="molecule type" value="Genomic_DNA"/>
</dbReference>
<dbReference type="SMR" id="Q5DWG5"/>
<dbReference type="GO" id="GO:0005743">
    <property type="term" value="C:mitochondrial inner membrane"/>
    <property type="evidence" value="ECO:0007669"/>
    <property type="project" value="UniProtKB-SubCell"/>
</dbReference>
<dbReference type="GO" id="GO:0045275">
    <property type="term" value="C:respiratory chain complex III"/>
    <property type="evidence" value="ECO:0007669"/>
    <property type="project" value="InterPro"/>
</dbReference>
<dbReference type="GO" id="GO:0046872">
    <property type="term" value="F:metal ion binding"/>
    <property type="evidence" value="ECO:0007669"/>
    <property type="project" value="UniProtKB-KW"/>
</dbReference>
<dbReference type="GO" id="GO:0008121">
    <property type="term" value="F:ubiquinol-cytochrome-c reductase activity"/>
    <property type="evidence" value="ECO:0007669"/>
    <property type="project" value="InterPro"/>
</dbReference>
<dbReference type="GO" id="GO:0006122">
    <property type="term" value="P:mitochondrial electron transport, ubiquinol to cytochrome c"/>
    <property type="evidence" value="ECO:0007669"/>
    <property type="project" value="TreeGrafter"/>
</dbReference>
<dbReference type="CDD" id="cd00290">
    <property type="entry name" value="cytochrome_b_C"/>
    <property type="match status" value="1"/>
</dbReference>
<dbReference type="CDD" id="cd00284">
    <property type="entry name" value="Cytochrome_b_N"/>
    <property type="match status" value="1"/>
</dbReference>
<dbReference type="FunFam" id="1.20.810.10:FF:000002">
    <property type="entry name" value="Cytochrome b"/>
    <property type="match status" value="1"/>
</dbReference>
<dbReference type="Gene3D" id="1.20.810.10">
    <property type="entry name" value="Cytochrome Bc1 Complex, Chain C"/>
    <property type="match status" value="1"/>
</dbReference>
<dbReference type="InterPro" id="IPR005798">
    <property type="entry name" value="Cyt_b/b6_C"/>
</dbReference>
<dbReference type="InterPro" id="IPR036150">
    <property type="entry name" value="Cyt_b/b6_C_sf"/>
</dbReference>
<dbReference type="InterPro" id="IPR005797">
    <property type="entry name" value="Cyt_b/b6_N"/>
</dbReference>
<dbReference type="InterPro" id="IPR027387">
    <property type="entry name" value="Cytb/b6-like_sf"/>
</dbReference>
<dbReference type="InterPro" id="IPR030689">
    <property type="entry name" value="Cytochrome_b"/>
</dbReference>
<dbReference type="InterPro" id="IPR048260">
    <property type="entry name" value="Cytochrome_b_C_euk/bac"/>
</dbReference>
<dbReference type="InterPro" id="IPR048259">
    <property type="entry name" value="Cytochrome_b_N_euk/bac"/>
</dbReference>
<dbReference type="InterPro" id="IPR016174">
    <property type="entry name" value="Di-haem_cyt_TM"/>
</dbReference>
<dbReference type="PANTHER" id="PTHR19271">
    <property type="entry name" value="CYTOCHROME B"/>
    <property type="match status" value="1"/>
</dbReference>
<dbReference type="PANTHER" id="PTHR19271:SF16">
    <property type="entry name" value="CYTOCHROME B"/>
    <property type="match status" value="1"/>
</dbReference>
<dbReference type="Pfam" id="PF00032">
    <property type="entry name" value="Cytochrom_B_C"/>
    <property type="match status" value="1"/>
</dbReference>
<dbReference type="Pfam" id="PF00033">
    <property type="entry name" value="Cytochrome_B"/>
    <property type="match status" value="1"/>
</dbReference>
<dbReference type="PIRSF" id="PIRSF038885">
    <property type="entry name" value="COB"/>
    <property type="match status" value="1"/>
</dbReference>
<dbReference type="SUPFAM" id="SSF81648">
    <property type="entry name" value="a domain/subunit of cytochrome bc1 complex (Ubiquinol-cytochrome c reductase)"/>
    <property type="match status" value="1"/>
</dbReference>
<dbReference type="SUPFAM" id="SSF81342">
    <property type="entry name" value="Transmembrane di-heme cytochromes"/>
    <property type="match status" value="1"/>
</dbReference>
<dbReference type="PROSITE" id="PS51003">
    <property type="entry name" value="CYTB_CTER"/>
    <property type="match status" value="1"/>
</dbReference>
<dbReference type="PROSITE" id="PS51002">
    <property type="entry name" value="CYTB_NTER"/>
    <property type="match status" value="1"/>
</dbReference>
<geneLocation type="mitochondrion"/>
<evidence type="ECO:0000250" key="1"/>
<evidence type="ECO:0000250" key="2">
    <source>
        <dbReference type="UniProtKB" id="P00157"/>
    </source>
</evidence>
<evidence type="ECO:0000255" key="3">
    <source>
        <dbReference type="PROSITE-ProRule" id="PRU00967"/>
    </source>
</evidence>
<evidence type="ECO:0000255" key="4">
    <source>
        <dbReference type="PROSITE-ProRule" id="PRU00968"/>
    </source>
</evidence>
<proteinExistence type="inferred from homology"/>
<keyword id="KW-0249">Electron transport</keyword>
<keyword id="KW-0349">Heme</keyword>
<keyword id="KW-0408">Iron</keyword>
<keyword id="KW-0472">Membrane</keyword>
<keyword id="KW-0479">Metal-binding</keyword>
<keyword id="KW-0496">Mitochondrion</keyword>
<keyword id="KW-0999">Mitochondrion inner membrane</keyword>
<keyword id="KW-0679">Respiratory chain</keyword>
<keyword id="KW-0812">Transmembrane</keyword>
<keyword id="KW-1133">Transmembrane helix</keyword>
<keyword id="KW-0813">Transport</keyword>
<keyword id="KW-0830">Ubiquinone</keyword>
<feature type="chain" id="PRO_0000060965" description="Cytochrome b">
    <location>
        <begin position="1"/>
        <end position="379"/>
    </location>
</feature>
<feature type="transmembrane region" description="Helical" evidence="2">
    <location>
        <begin position="33"/>
        <end position="53"/>
    </location>
</feature>
<feature type="transmembrane region" description="Helical" evidence="2">
    <location>
        <begin position="77"/>
        <end position="98"/>
    </location>
</feature>
<feature type="transmembrane region" description="Helical" evidence="2">
    <location>
        <begin position="113"/>
        <end position="133"/>
    </location>
</feature>
<feature type="transmembrane region" description="Helical" evidence="2">
    <location>
        <begin position="178"/>
        <end position="198"/>
    </location>
</feature>
<feature type="transmembrane region" description="Helical" evidence="2">
    <location>
        <begin position="226"/>
        <end position="246"/>
    </location>
</feature>
<feature type="transmembrane region" description="Helical" evidence="2">
    <location>
        <begin position="288"/>
        <end position="308"/>
    </location>
</feature>
<feature type="transmembrane region" description="Helical" evidence="2">
    <location>
        <begin position="320"/>
        <end position="340"/>
    </location>
</feature>
<feature type="transmembrane region" description="Helical" evidence="2">
    <location>
        <begin position="347"/>
        <end position="367"/>
    </location>
</feature>
<feature type="binding site" description="axial binding residue" evidence="2">
    <location>
        <position position="83"/>
    </location>
    <ligand>
        <name>heme b</name>
        <dbReference type="ChEBI" id="CHEBI:60344"/>
        <label>b562</label>
    </ligand>
    <ligandPart>
        <name>Fe</name>
        <dbReference type="ChEBI" id="CHEBI:18248"/>
    </ligandPart>
</feature>
<feature type="binding site" description="axial binding residue" evidence="2">
    <location>
        <position position="97"/>
    </location>
    <ligand>
        <name>heme b</name>
        <dbReference type="ChEBI" id="CHEBI:60344"/>
        <label>b566</label>
    </ligand>
    <ligandPart>
        <name>Fe</name>
        <dbReference type="ChEBI" id="CHEBI:18248"/>
    </ligandPart>
</feature>
<feature type="binding site" description="axial binding residue" evidence="2">
    <location>
        <position position="182"/>
    </location>
    <ligand>
        <name>heme b</name>
        <dbReference type="ChEBI" id="CHEBI:60344"/>
        <label>b562</label>
    </ligand>
    <ligandPart>
        <name>Fe</name>
        <dbReference type="ChEBI" id="CHEBI:18248"/>
    </ligandPart>
</feature>
<feature type="binding site" description="axial binding residue" evidence="2">
    <location>
        <position position="196"/>
    </location>
    <ligand>
        <name>heme b</name>
        <dbReference type="ChEBI" id="CHEBI:60344"/>
        <label>b566</label>
    </ligand>
    <ligandPart>
        <name>Fe</name>
        <dbReference type="ChEBI" id="CHEBI:18248"/>
    </ligandPart>
</feature>
<feature type="binding site" evidence="2">
    <location>
        <position position="201"/>
    </location>
    <ligand>
        <name>a ubiquinone</name>
        <dbReference type="ChEBI" id="CHEBI:16389"/>
    </ligand>
</feature>
<feature type="sequence variant" description="In strain: Isolate SIK0557.">
    <original>A</original>
    <variation>T</variation>
    <location>
        <position position="122"/>
    </location>
</feature>
<protein>
    <recommendedName>
        <fullName>Cytochrome b</fullName>
    </recommendedName>
    <alternativeName>
        <fullName>Complex III subunit 3</fullName>
    </alternativeName>
    <alternativeName>
        <fullName>Complex III subunit III</fullName>
    </alternativeName>
    <alternativeName>
        <fullName>Cytochrome b-c1 complex subunit 3</fullName>
    </alternativeName>
    <alternativeName>
        <fullName>Ubiquinol-cytochrome-c reductase complex cytochrome b subunit</fullName>
    </alternativeName>
</protein>